<protein>
    <recommendedName>
        <fullName evidence="1">UPF0391 membrane protein Noc_0482</fullName>
    </recommendedName>
</protein>
<keyword id="KW-1003">Cell membrane</keyword>
<keyword id="KW-0472">Membrane</keyword>
<keyword id="KW-1185">Reference proteome</keyword>
<keyword id="KW-0812">Transmembrane</keyword>
<keyword id="KW-1133">Transmembrane helix</keyword>
<feature type="chain" id="PRO_0000256752" description="UPF0391 membrane protein Noc_0482">
    <location>
        <begin position="1"/>
        <end position="56"/>
    </location>
</feature>
<feature type="transmembrane region" description="Helical" evidence="1">
    <location>
        <begin position="1"/>
        <end position="21"/>
    </location>
</feature>
<feature type="transmembrane region" description="Helical" evidence="1">
    <location>
        <begin position="29"/>
        <end position="49"/>
    </location>
</feature>
<evidence type="ECO:0000255" key="1">
    <source>
        <dbReference type="HAMAP-Rule" id="MF_01361"/>
    </source>
</evidence>
<gene>
    <name type="ordered locus">Noc_0482</name>
</gene>
<organism>
    <name type="scientific">Nitrosococcus oceani (strain ATCC 19707 / BCRC 17464 / JCM 30415 / NCIMB 11848 / C-107)</name>
    <dbReference type="NCBI Taxonomy" id="323261"/>
    <lineage>
        <taxon>Bacteria</taxon>
        <taxon>Pseudomonadati</taxon>
        <taxon>Pseudomonadota</taxon>
        <taxon>Gammaproteobacteria</taxon>
        <taxon>Chromatiales</taxon>
        <taxon>Chromatiaceae</taxon>
        <taxon>Nitrosococcus</taxon>
    </lineage>
</organism>
<sequence>MFGWAVTFLIIALIAALFGFTGLAGVATHIAWILFVVGLILFVVFLLLGRRGRPPL</sequence>
<proteinExistence type="inferred from homology"/>
<accession>Q3JDU1</accession>
<reference key="1">
    <citation type="journal article" date="2006" name="Appl. Environ. Microbiol.">
        <title>Complete genome sequence of the marine, chemolithoautotrophic, ammonia-oxidizing bacterium Nitrosococcus oceani ATCC 19707.</title>
        <authorList>
            <person name="Klotz M.G."/>
            <person name="Arp D.J."/>
            <person name="Chain P.S.G."/>
            <person name="El-Sheikh A.F."/>
            <person name="Hauser L.J."/>
            <person name="Hommes N.G."/>
            <person name="Larimer F.W."/>
            <person name="Malfatti S.A."/>
            <person name="Norton J.M."/>
            <person name="Poret-Peterson A.T."/>
            <person name="Vergez L.M."/>
            <person name="Ward B.B."/>
        </authorList>
    </citation>
    <scope>NUCLEOTIDE SEQUENCE [LARGE SCALE GENOMIC DNA]</scope>
    <source>
        <strain>ATCC 19707 / BCRC 17464 / JCM 30415 / NCIMB 11848 / C-107</strain>
    </source>
</reference>
<dbReference type="EMBL" id="CP000127">
    <property type="protein sequence ID" value="ABA57005.1"/>
    <property type="molecule type" value="Genomic_DNA"/>
</dbReference>
<dbReference type="RefSeq" id="WP_002812759.1">
    <property type="nucleotide sequence ID" value="NC_007484.1"/>
</dbReference>
<dbReference type="FunCoup" id="Q3JDU1">
    <property type="interactions" value="2"/>
</dbReference>
<dbReference type="STRING" id="323261.Noc_0482"/>
<dbReference type="KEGG" id="noc:Noc_0482"/>
<dbReference type="eggNOG" id="COG5487">
    <property type="taxonomic scope" value="Bacteria"/>
</dbReference>
<dbReference type="HOGENOM" id="CLU_187346_2_1_6"/>
<dbReference type="InParanoid" id="Q3JDU1"/>
<dbReference type="Proteomes" id="UP000006838">
    <property type="component" value="Chromosome"/>
</dbReference>
<dbReference type="GO" id="GO:0005886">
    <property type="term" value="C:plasma membrane"/>
    <property type="evidence" value="ECO:0007669"/>
    <property type="project" value="UniProtKB-SubCell"/>
</dbReference>
<dbReference type="HAMAP" id="MF_01361">
    <property type="entry name" value="UPF0391"/>
    <property type="match status" value="1"/>
</dbReference>
<dbReference type="InterPro" id="IPR009760">
    <property type="entry name" value="DUF1328"/>
</dbReference>
<dbReference type="NCBIfam" id="NF010229">
    <property type="entry name" value="PRK13682.1-4"/>
    <property type="match status" value="1"/>
</dbReference>
<dbReference type="Pfam" id="PF07043">
    <property type="entry name" value="DUF1328"/>
    <property type="match status" value="1"/>
</dbReference>
<dbReference type="PIRSF" id="PIRSF036466">
    <property type="entry name" value="UCP036466"/>
    <property type="match status" value="1"/>
</dbReference>
<name>Y482_NITOC</name>
<comment type="subcellular location">
    <subcellularLocation>
        <location evidence="1">Cell membrane</location>
        <topology evidence="1">Multi-pass membrane protein</topology>
    </subcellularLocation>
</comment>
<comment type="similarity">
    <text evidence="1">Belongs to the UPF0391 family.</text>
</comment>